<dbReference type="EC" id="4.3.2.10" evidence="1"/>
<dbReference type="EMBL" id="CP000151">
    <property type="protein sequence ID" value="ABB07131.1"/>
    <property type="molecule type" value="Genomic_DNA"/>
</dbReference>
<dbReference type="RefSeq" id="WP_011350732.1">
    <property type="nucleotide sequence ID" value="NZ_WNDV01000034.1"/>
</dbReference>
<dbReference type="SMR" id="Q39K85"/>
<dbReference type="GeneID" id="62009828"/>
<dbReference type="KEGG" id="bur:Bcep18194_A3529"/>
<dbReference type="HOGENOM" id="CLU_048577_4_0_4"/>
<dbReference type="UniPathway" id="UPA00031">
    <property type="reaction ID" value="UER00010"/>
</dbReference>
<dbReference type="Proteomes" id="UP000002705">
    <property type="component" value="Chromosome 1"/>
</dbReference>
<dbReference type="GO" id="GO:0005737">
    <property type="term" value="C:cytoplasm"/>
    <property type="evidence" value="ECO:0007669"/>
    <property type="project" value="UniProtKB-SubCell"/>
</dbReference>
<dbReference type="GO" id="GO:0000107">
    <property type="term" value="F:imidazoleglycerol-phosphate synthase activity"/>
    <property type="evidence" value="ECO:0007669"/>
    <property type="project" value="UniProtKB-UniRule"/>
</dbReference>
<dbReference type="GO" id="GO:0016829">
    <property type="term" value="F:lyase activity"/>
    <property type="evidence" value="ECO:0007669"/>
    <property type="project" value="UniProtKB-KW"/>
</dbReference>
<dbReference type="GO" id="GO:0000105">
    <property type="term" value="P:L-histidine biosynthetic process"/>
    <property type="evidence" value="ECO:0007669"/>
    <property type="project" value="UniProtKB-UniRule"/>
</dbReference>
<dbReference type="CDD" id="cd04731">
    <property type="entry name" value="HisF"/>
    <property type="match status" value="1"/>
</dbReference>
<dbReference type="FunFam" id="3.20.20.70:FF:000006">
    <property type="entry name" value="Imidazole glycerol phosphate synthase subunit HisF"/>
    <property type="match status" value="1"/>
</dbReference>
<dbReference type="Gene3D" id="3.20.20.70">
    <property type="entry name" value="Aldolase class I"/>
    <property type="match status" value="1"/>
</dbReference>
<dbReference type="HAMAP" id="MF_01013">
    <property type="entry name" value="HisF"/>
    <property type="match status" value="1"/>
</dbReference>
<dbReference type="InterPro" id="IPR013785">
    <property type="entry name" value="Aldolase_TIM"/>
</dbReference>
<dbReference type="InterPro" id="IPR006062">
    <property type="entry name" value="His_biosynth"/>
</dbReference>
<dbReference type="InterPro" id="IPR004651">
    <property type="entry name" value="HisF"/>
</dbReference>
<dbReference type="InterPro" id="IPR050064">
    <property type="entry name" value="IGPS_HisA/HisF"/>
</dbReference>
<dbReference type="InterPro" id="IPR011060">
    <property type="entry name" value="RibuloseP-bd_barrel"/>
</dbReference>
<dbReference type="NCBIfam" id="TIGR00735">
    <property type="entry name" value="hisF"/>
    <property type="match status" value="1"/>
</dbReference>
<dbReference type="PANTHER" id="PTHR21235:SF2">
    <property type="entry name" value="IMIDAZOLE GLYCEROL PHOSPHATE SYNTHASE HISHF"/>
    <property type="match status" value="1"/>
</dbReference>
<dbReference type="PANTHER" id="PTHR21235">
    <property type="entry name" value="IMIDAZOLE GLYCEROL PHOSPHATE SYNTHASE SUBUNIT HISF/H IGP SYNTHASE SUBUNIT HISF/H"/>
    <property type="match status" value="1"/>
</dbReference>
<dbReference type="Pfam" id="PF00977">
    <property type="entry name" value="His_biosynth"/>
    <property type="match status" value="1"/>
</dbReference>
<dbReference type="SUPFAM" id="SSF51366">
    <property type="entry name" value="Ribulose-phoshate binding barrel"/>
    <property type="match status" value="1"/>
</dbReference>
<organism>
    <name type="scientific">Burkholderia lata (strain ATCC 17760 / DSM 23089 / LMG 22485 / NCIMB 9086 / R18194 / 383)</name>
    <dbReference type="NCBI Taxonomy" id="482957"/>
    <lineage>
        <taxon>Bacteria</taxon>
        <taxon>Pseudomonadati</taxon>
        <taxon>Pseudomonadota</taxon>
        <taxon>Betaproteobacteria</taxon>
        <taxon>Burkholderiales</taxon>
        <taxon>Burkholderiaceae</taxon>
        <taxon>Burkholderia</taxon>
        <taxon>Burkholderia cepacia complex</taxon>
    </lineage>
</organism>
<keyword id="KW-0028">Amino-acid biosynthesis</keyword>
<keyword id="KW-0963">Cytoplasm</keyword>
<keyword id="KW-0368">Histidine biosynthesis</keyword>
<keyword id="KW-0456">Lyase</keyword>
<proteinExistence type="inferred from homology"/>
<protein>
    <recommendedName>
        <fullName evidence="1">Imidazole glycerol phosphate synthase subunit HisF</fullName>
        <ecNumber evidence="1">4.3.2.10</ecNumber>
    </recommendedName>
    <alternativeName>
        <fullName evidence="1">IGP synthase cyclase subunit</fullName>
    </alternativeName>
    <alternativeName>
        <fullName evidence="1">IGP synthase subunit HisF</fullName>
    </alternativeName>
    <alternativeName>
        <fullName evidence="1">ImGP synthase subunit HisF</fullName>
        <shortName evidence="1">IGPS subunit HisF</shortName>
    </alternativeName>
</protein>
<evidence type="ECO:0000255" key="1">
    <source>
        <dbReference type="HAMAP-Rule" id="MF_01013"/>
    </source>
</evidence>
<feature type="chain" id="PRO_0000230124" description="Imidazole glycerol phosphate synthase subunit HisF">
    <location>
        <begin position="1"/>
        <end position="257"/>
    </location>
</feature>
<feature type="active site" evidence="1">
    <location>
        <position position="12"/>
    </location>
</feature>
<feature type="active site" evidence="1">
    <location>
        <position position="131"/>
    </location>
</feature>
<comment type="function">
    <text evidence="1">IGPS catalyzes the conversion of PRFAR and glutamine to IGP, AICAR and glutamate. The HisF subunit catalyzes the cyclization activity that produces IGP and AICAR from PRFAR using the ammonia provided by the HisH subunit.</text>
</comment>
<comment type="catalytic activity">
    <reaction evidence="1">
        <text>5-[(5-phospho-1-deoxy-D-ribulos-1-ylimino)methylamino]-1-(5-phospho-beta-D-ribosyl)imidazole-4-carboxamide + L-glutamine = D-erythro-1-(imidazol-4-yl)glycerol 3-phosphate + 5-amino-1-(5-phospho-beta-D-ribosyl)imidazole-4-carboxamide + L-glutamate + H(+)</text>
        <dbReference type="Rhea" id="RHEA:24793"/>
        <dbReference type="ChEBI" id="CHEBI:15378"/>
        <dbReference type="ChEBI" id="CHEBI:29985"/>
        <dbReference type="ChEBI" id="CHEBI:58278"/>
        <dbReference type="ChEBI" id="CHEBI:58359"/>
        <dbReference type="ChEBI" id="CHEBI:58475"/>
        <dbReference type="ChEBI" id="CHEBI:58525"/>
        <dbReference type="EC" id="4.3.2.10"/>
    </reaction>
</comment>
<comment type="pathway">
    <text evidence="1">Amino-acid biosynthesis; L-histidine biosynthesis; L-histidine from 5-phospho-alpha-D-ribose 1-diphosphate: step 5/9.</text>
</comment>
<comment type="subunit">
    <text evidence="1">Heterodimer of HisH and HisF.</text>
</comment>
<comment type="subcellular location">
    <subcellularLocation>
        <location evidence="1">Cytoplasm</location>
    </subcellularLocation>
</comment>
<comment type="similarity">
    <text evidence="1">Belongs to the HisA/HisF family.</text>
</comment>
<accession>Q39K85</accession>
<name>HIS6_BURL3</name>
<sequence>MALAKRIIPCLDVTAGRVVKGVNFVELRDAGDPVEIARRYDDQGADELTFLDITATSDQRDLILPIIEAVASQVFIPLTVGGGVRAVEDVRRLLNAGADKVSMNSSAVANPQLVRDAADKYGSQCIVVAIDAKRVSADGETPRWEVFTHGGRKNTGLDAIEWARKMAELGAGEILLTSMDRDGTKSGFDLALTRGVSDAVPVPVIASGGVGSLQHLADGIKDGRADAVLAASIFHYGEHTVGEAKRFMADQGIPVRL</sequence>
<gene>
    <name evidence="1" type="primary">hisF</name>
    <name type="ordered locus">Bcep18194_A3529</name>
</gene>
<reference key="1">
    <citation type="submission" date="2005-10" db="EMBL/GenBank/DDBJ databases">
        <title>Complete sequence of chromosome 1 of Burkholderia sp. 383.</title>
        <authorList>
            <consortium name="US DOE Joint Genome Institute"/>
            <person name="Copeland A."/>
            <person name="Lucas S."/>
            <person name="Lapidus A."/>
            <person name="Barry K."/>
            <person name="Detter J.C."/>
            <person name="Glavina T."/>
            <person name="Hammon N."/>
            <person name="Israni S."/>
            <person name="Pitluck S."/>
            <person name="Chain P."/>
            <person name="Malfatti S."/>
            <person name="Shin M."/>
            <person name="Vergez L."/>
            <person name="Schmutz J."/>
            <person name="Larimer F."/>
            <person name="Land M."/>
            <person name="Kyrpides N."/>
            <person name="Lykidis A."/>
            <person name="Richardson P."/>
        </authorList>
    </citation>
    <scope>NUCLEOTIDE SEQUENCE [LARGE SCALE GENOMIC DNA]</scope>
    <source>
        <strain>ATCC 17760 / DSM 23089 / LMG 22485 / NCIMB 9086 / R18194 / 383</strain>
    </source>
</reference>